<feature type="chain" id="PRO_1000078992" description="Chorismate synthase">
    <location>
        <begin position="1"/>
        <end position="367"/>
    </location>
</feature>
<feature type="binding site" evidence="1">
    <location>
        <position position="48"/>
    </location>
    <ligand>
        <name>NADP(+)</name>
        <dbReference type="ChEBI" id="CHEBI:58349"/>
    </ligand>
</feature>
<feature type="binding site" evidence="1">
    <location>
        <begin position="125"/>
        <end position="127"/>
    </location>
    <ligand>
        <name>FMN</name>
        <dbReference type="ChEBI" id="CHEBI:58210"/>
    </ligand>
</feature>
<feature type="binding site" evidence="1">
    <location>
        <begin position="241"/>
        <end position="242"/>
    </location>
    <ligand>
        <name>FMN</name>
        <dbReference type="ChEBI" id="CHEBI:58210"/>
    </ligand>
</feature>
<feature type="binding site" evidence="1">
    <location>
        <position position="285"/>
    </location>
    <ligand>
        <name>FMN</name>
        <dbReference type="ChEBI" id="CHEBI:58210"/>
    </ligand>
</feature>
<feature type="binding site" evidence="1">
    <location>
        <begin position="300"/>
        <end position="304"/>
    </location>
    <ligand>
        <name>FMN</name>
        <dbReference type="ChEBI" id="CHEBI:58210"/>
    </ligand>
</feature>
<feature type="binding site" evidence="1">
    <location>
        <position position="326"/>
    </location>
    <ligand>
        <name>FMN</name>
        <dbReference type="ChEBI" id="CHEBI:58210"/>
    </ligand>
</feature>
<gene>
    <name evidence="1" type="primary">aroC</name>
    <name type="ordered locus">Dshi_3275</name>
</gene>
<name>AROC_DINSH</name>
<evidence type="ECO:0000255" key="1">
    <source>
        <dbReference type="HAMAP-Rule" id="MF_00300"/>
    </source>
</evidence>
<sequence length="367" mass="38781">MSFNTFGHLFRVTTWGESHGPALGATVDGCPPGVPITEEALQVWLDKRKPGQNKFTTQRREPDAVEILSGVFEGQSTGSPIQLMIRNADQRSKDYGDIAEKFRPGHADITYWQKYGIRDYRGGGRSSARETAARVAAGGVARAALGALVPDLRITGYMTQMGPHGIDRARFDWEQIDQNPFWTPDAAAAEDWAAYLDGLRKAGSSVGAVIEVTARGVPVGLGAPIYAKLDTDLAAAMMSINAVKAVEIGEGMAAASLTGEANADEIFMGGDGPEYSSNHAGGILGGISTGQDVVVRFAVKPTSSILTTRQTITKSGAPAEIITKGRHDPCVGIRAVPVAEAMMACVLLDHLLLHRGQVGDGPRGAIG</sequence>
<protein>
    <recommendedName>
        <fullName evidence="1">Chorismate synthase</fullName>
        <shortName evidence="1">CS</shortName>
        <ecNumber evidence="1">4.2.3.5</ecNumber>
    </recommendedName>
    <alternativeName>
        <fullName evidence="1">5-enolpyruvylshikimate-3-phosphate phospholyase</fullName>
    </alternativeName>
</protein>
<dbReference type="EC" id="4.2.3.5" evidence="1"/>
<dbReference type="EMBL" id="CP000830">
    <property type="protein sequence ID" value="ABV95008.1"/>
    <property type="molecule type" value="Genomic_DNA"/>
</dbReference>
<dbReference type="RefSeq" id="WP_012179935.1">
    <property type="nucleotide sequence ID" value="NC_009952.1"/>
</dbReference>
<dbReference type="SMR" id="A8LMT3"/>
<dbReference type="STRING" id="398580.Dshi_3275"/>
<dbReference type="KEGG" id="dsh:Dshi_3275"/>
<dbReference type="eggNOG" id="COG0082">
    <property type="taxonomic scope" value="Bacteria"/>
</dbReference>
<dbReference type="HOGENOM" id="CLU_034547_0_0_5"/>
<dbReference type="OrthoDB" id="9771806at2"/>
<dbReference type="UniPathway" id="UPA00053">
    <property type="reaction ID" value="UER00090"/>
</dbReference>
<dbReference type="Proteomes" id="UP000006833">
    <property type="component" value="Chromosome"/>
</dbReference>
<dbReference type="GO" id="GO:0005829">
    <property type="term" value="C:cytosol"/>
    <property type="evidence" value="ECO:0007669"/>
    <property type="project" value="TreeGrafter"/>
</dbReference>
<dbReference type="GO" id="GO:0004107">
    <property type="term" value="F:chorismate synthase activity"/>
    <property type="evidence" value="ECO:0007669"/>
    <property type="project" value="UniProtKB-UniRule"/>
</dbReference>
<dbReference type="GO" id="GO:0010181">
    <property type="term" value="F:FMN binding"/>
    <property type="evidence" value="ECO:0007669"/>
    <property type="project" value="TreeGrafter"/>
</dbReference>
<dbReference type="GO" id="GO:0008652">
    <property type="term" value="P:amino acid biosynthetic process"/>
    <property type="evidence" value="ECO:0007669"/>
    <property type="project" value="UniProtKB-KW"/>
</dbReference>
<dbReference type="GO" id="GO:0009073">
    <property type="term" value="P:aromatic amino acid family biosynthetic process"/>
    <property type="evidence" value="ECO:0007669"/>
    <property type="project" value="UniProtKB-KW"/>
</dbReference>
<dbReference type="GO" id="GO:0009423">
    <property type="term" value="P:chorismate biosynthetic process"/>
    <property type="evidence" value="ECO:0007669"/>
    <property type="project" value="UniProtKB-UniRule"/>
</dbReference>
<dbReference type="CDD" id="cd07304">
    <property type="entry name" value="Chorismate_synthase"/>
    <property type="match status" value="1"/>
</dbReference>
<dbReference type="Gene3D" id="3.60.150.10">
    <property type="entry name" value="Chorismate synthase AroC"/>
    <property type="match status" value="1"/>
</dbReference>
<dbReference type="HAMAP" id="MF_00300">
    <property type="entry name" value="Chorismate_synth"/>
    <property type="match status" value="1"/>
</dbReference>
<dbReference type="InterPro" id="IPR000453">
    <property type="entry name" value="Chorismate_synth"/>
</dbReference>
<dbReference type="InterPro" id="IPR035904">
    <property type="entry name" value="Chorismate_synth_AroC_sf"/>
</dbReference>
<dbReference type="InterPro" id="IPR020541">
    <property type="entry name" value="Chorismate_synthase_CS"/>
</dbReference>
<dbReference type="NCBIfam" id="TIGR00033">
    <property type="entry name" value="aroC"/>
    <property type="match status" value="1"/>
</dbReference>
<dbReference type="NCBIfam" id="NF003793">
    <property type="entry name" value="PRK05382.1"/>
    <property type="match status" value="1"/>
</dbReference>
<dbReference type="PANTHER" id="PTHR21085">
    <property type="entry name" value="CHORISMATE SYNTHASE"/>
    <property type="match status" value="1"/>
</dbReference>
<dbReference type="PANTHER" id="PTHR21085:SF0">
    <property type="entry name" value="CHORISMATE SYNTHASE"/>
    <property type="match status" value="1"/>
</dbReference>
<dbReference type="Pfam" id="PF01264">
    <property type="entry name" value="Chorismate_synt"/>
    <property type="match status" value="1"/>
</dbReference>
<dbReference type="PIRSF" id="PIRSF001456">
    <property type="entry name" value="Chorismate_synth"/>
    <property type="match status" value="1"/>
</dbReference>
<dbReference type="SUPFAM" id="SSF103263">
    <property type="entry name" value="Chorismate synthase, AroC"/>
    <property type="match status" value="1"/>
</dbReference>
<dbReference type="PROSITE" id="PS00787">
    <property type="entry name" value="CHORISMATE_SYNTHASE_1"/>
    <property type="match status" value="1"/>
</dbReference>
<dbReference type="PROSITE" id="PS00789">
    <property type="entry name" value="CHORISMATE_SYNTHASE_3"/>
    <property type="match status" value="1"/>
</dbReference>
<accession>A8LMT3</accession>
<organism>
    <name type="scientific">Dinoroseobacter shibae (strain DSM 16493 / NCIMB 14021 / DFL 12)</name>
    <dbReference type="NCBI Taxonomy" id="398580"/>
    <lineage>
        <taxon>Bacteria</taxon>
        <taxon>Pseudomonadati</taxon>
        <taxon>Pseudomonadota</taxon>
        <taxon>Alphaproteobacteria</taxon>
        <taxon>Rhodobacterales</taxon>
        <taxon>Roseobacteraceae</taxon>
        <taxon>Dinoroseobacter</taxon>
    </lineage>
</organism>
<proteinExistence type="inferred from homology"/>
<keyword id="KW-0028">Amino-acid biosynthesis</keyword>
<keyword id="KW-0057">Aromatic amino acid biosynthesis</keyword>
<keyword id="KW-0274">FAD</keyword>
<keyword id="KW-0285">Flavoprotein</keyword>
<keyword id="KW-0288">FMN</keyword>
<keyword id="KW-0456">Lyase</keyword>
<keyword id="KW-0521">NADP</keyword>
<keyword id="KW-1185">Reference proteome</keyword>
<reference key="1">
    <citation type="journal article" date="2010" name="ISME J.">
        <title>The complete genome sequence of the algal symbiont Dinoroseobacter shibae: a hitchhiker's guide to life in the sea.</title>
        <authorList>
            <person name="Wagner-Dobler I."/>
            <person name="Ballhausen B."/>
            <person name="Berger M."/>
            <person name="Brinkhoff T."/>
            <person name="Buchholz I."/>
            <person name="Bunk B."/>
            <person name="Cypionka H."/>
            <person name="Daniel R."/>
            <person name="Drepper T."/>
            <person name="Gerdts G."/>
            <person name="Hahnke S."/>
            <person name="Han C."/>
            <person name="Jahn D."/>
            <person name="Kalhoefer D."/>
            <person name="Kiss H."/>
            <person name="Klenk H.P."/>
            <person name="Kyrpides N."/>
            <person name="Liebl W."/>
            <person name="Liesegang H."/>
            <person name="Meincke L."/>
            <person name="Pati A."/>
            <person name="Petersen J."/>
            <person name="Piekarski T."/>
            <person name="Pommerenke C."/>
            <person name="Pradella S."/>
            <person name="Pukall R."/>
            <person name="Rabus R."/>
            <person name="Stackebrandt E."/>
            <person name="Thole S."/>
            <person name="Thompson L."/>
            <person name="Tielen P."/>
            <person name="Tomasch J."/>
            <person name="von Jan M."/>
            <person name="Wanphrut N."/>
            <person name="Wichels A."/>
            <person name="Zech H."/>
            <person name="Simon M."/>
        </authorList>
    </citation>
    <scope>NUCLEOTIDE SEQUENCE [LARGE SCALE GENOMIC DNA]</scope>
    <source>
        <strain>DSM 16493 / NCIMB 14021 / DFL 12</strain>
    </source>
</reference>
<comment type="function">
    <text evidence="1">Catalyzes the anti-1,4-elimination of the C-3 phosphate and the C-6 proR hydrogen from 5-enolpyruvylshikimate-3-phosphate (EPSP) to yield chorismate, which is the branch point compound that serves as the starting substrate for the three terminal pathways of aromatic amino acid biosynthesis. This reaction introduces a second double bond into the aromatic ring system.</text>
</comment>
<comment type="catalytic activity">
    <reaction evidence="1">
        <text>5-O-(1-carboxyvinyl)-3-phosphoshikimate = chorismate + phosphate</text>
        <dbReference type="Rhea" id="RHEA:21020"/>
        <dbReference type="ChEBI" id="CHEBI:29748"/>
        <dbReference type="ChEBI" id="CHEBI:43474"/>
        <dbReference type="ChEBI" id="CHEBI:57701"/>
        <dbReference type="EC" id="4.2.3.5"/>
    </reaction>
</comment>
<comment type="cofactor">
    <cofactor evidence="1">
        <name>FMNH2</name>
        <dbReference type="ChEBI" id="CHEBI:57618"/>
    </cofactor>
    <text evidence="1">Reduced FMN (FMNH(2)).</text>
</comment>
<comment type="pathway">
    <text evidence="1">Metabolic intermediate biosynthesis; chorismate biosynthesis; chorismate from D-erythrose 4-phosphate and phosphoenolpyruvate: step 7/7.</text>
</comment>
<comment type="subunit">
    <text evidence="1">Homotetramer.</text>
</comment>
<comment type="similarity">
    <text evidence="1">Belongs to the chorismate synthase family.</text>
</comment>